<reference key="1">
    <citation type="journal article" date="2009" name="Environ. Microbiol.">
        <title>Contribution of mobile genetic elements to Desulfovibrio vulgaris genome plasticity.</title>
        <authorList>
            <person name="Walker C.B."/>
            <person name="Stolyar S."/>
            <person name="Chivian D."/>
            <person name="Pinel N."/>
            <person name="Gabster J.A."/>
            <person name="Dehal P.S."/>
            <person name="He Z."/>
            <person name="Yang Z.K."/>
            <person name="Yen H.C."/>
            <person name="Zhou J."/>
            <person name="Wall J.D."/>
            <person name="Hazen T.C."/>
            <person name="Arkin A.P."/>
            <person name="Stahl D.A."/>
        </authorList>
    </citation>
    <scope>NUCLEOTIDE SEQUENCE [LARGE SCALE GENOMIC DNA]</scope>
    <source>
        <strain>DP4</strain>
    </source>
</reference>
<proteinExistence type="inferred from homology"/>
<name>GLPK_NITV4</name>
<comment type="function">
    <text evidence="1">Key enzyme in the regulation of glycerol uptake and metabolism. Catalyzes the phosphorylation of glycerol to yield sn-glycerol 3-phosphate.</text>
</comment>
<comment type="catalytic activity">
    <reaction evidence="1">
        <text>glycerol + ATP = sn-glycerol 3-phosphate + ADP + H(+)</text>
        <dbReference type="Rhea" id="RHEA:21644"/>
        <dbReference type="ChEBI" id="CHEBI:15378"/>
        <dbReference type="ChEBI" id="CHEBI:17754"/>
        <dbReference type="ChEBI" id="CHEBI:30616"/>
        <dbReference type="ChEBI" id="CHEBI:57597"/>
        <dbReference type="ChEBI" id="CHEBI:456216"/>
        <dbReference type="EC" id="2.7.1.30"/>
    </reaction>
</comment>
<comment type="activity regulation">
    <text evidence="1">Inhibited by fructose 1,6-bisphosphate (FBP).</text>
</comment>
<comment type="pathway">
    <text evidence="1">Polyol metabolism; glycerol degradation via glycerol kinase pathway; sn-glycerol 3-phosphate from glycerol: step 1/1.</text>
</comment>
<comment type="similarity">
    <text evidence="1">Belongs to the FGGY kinase family.</text>
</comment>
<protein>
    <recommendedName>
        <fullName evidence="1">Glycerol kinase</fullName>
        <ecNumber evidence="1">2.7.1.30</ecNumber>
    </recommendedName>
    <alternativeName>
        <fullName evidence="1">ATP:glycerol 3-phosphotransferase</fullName>
    </alternativeName>
    <alternativeName>
        <fullName evidence="1">Glycerokinase</fullName>
        <shortName evidence="1">GK</shortName>
    </alternativeName>
</protein>
<evidence type="ECO:0000255" key="1">
    <source>
        <dbReference type="HAMAP-Rule" id="MF_00186"/>
    </source>
</evidence>
<sequence>MSNYVLALDQGTTSSRAILFTREGDIKQISQKEFTQIYPQPGWVEHNANEIFDTQSWVMRECLQEAGIGAADVVAAGITNQRETTVVWDKATGAPVYNAIVWQDRRTAGFCDELKARGLADVFRKKTGLVLDAYFSGTKVRWILDNVPGARAKAEKGELLFGTIDTWLIWNLTKGKAHVTDSSNASRTLMFNINTGAWDDELLGILDVPRSMLPRVTGSSEVVGDIHPEFLGKAIPIAGNAGDQQAATYGNACLKPGMAKNTYGTGCFMLMNTGTEVRSSQNNLLSTVAWTTPSGRFYALEGSVFIAGAVVQWLRDGLGIIKAAPEVEQLALSVPDNGGVYLVPAFAGLGAPHWDQYARGTMVGITRGATKAHIARAALESIALQTLDIMDCMQKDSGIKLAALRADGGATRNNLLMQFQADVLGVPVERPKVTETTALGAAYLAGLATGFWKSEDEIATMWQLDRRFEPNMSDDKRQHLVYEWQRAVERAKAWVEA</sequence>
<dbReference type="EC" id="2.7.1.30" evidence="1"/>
<dbReference type="EMBL" id="CP000527">
    <property type="protein sequence ID" value="ABM27276.1"/>
    <property type="molecule type" value="Genomic_DNA"/>
</dbReference>
<dbReference type="RefSeq" id="WP_010940392.1">
    <property type="nucleotide sequence ID" value="NC_008751.1"/>
</dbReference>
<dbReference type="SMR" id="A1VA10"/>
<dbReference type="KEGG" id="dvl:Dvul_0252"/>
<dbReference type="HOGENOM" id="CLU_009281_2_3_7"/>
<dbReference type="UniPathway" id="UPA00618">
    <property type="reaction ID" value="UER00672"/>
</dbReference>
<dbReference type="Proteomes" id="UP000009173">
    <property type="component" value="Chromosome"/>
</dbReference>
<dbReference type="GO" id="GO:0005829">
    <property type="term" value="C:cytosol"/>
    <property type="evidence" value="ECO:0007669"/>
    <property type="project" value="TreeGrafter"/>
</dbReference>
<dbReference type="GO" id="GO:0005524">
    <property type="term" value="F:ATP binding"/>
    <property type="evidence" value="ECO:0007669"/>
    <property type="project" value="UniProtKB-UniRule"/>
</dbReference>
<dbReference type="GO" id="GO:0004370">
    <property type="term" value="F:glycerol kinase activity"/>
    <property type="evidence" value="ECO:0000250"/>
    <property type="project" value="UniProtKB"/>
</dbReference>
<dbReference type="GO" id="GO:0019563">
    <property type="term" value="P:glycerol catabolic process"/>
    <property type="evidence" value="ECO:0007669"/>
    <property type="project" value="UniProtKB-UniRule"/>
</dbReference>
<dbReference type="GO" id="GO:0006071">
    <property type="term" value="P:glycerol metabolic process"/>
    <property type="evidence" value="ECO:0000250"/>
    <property type="project" value="UniProtKB"/>
</dbReference>
<dbReference type="GO" id="GO:0006072">
    <property type="term" value="P:glycerol-3-phosphate metabolic process"/>
    <property type="evidence" value="ECO:0007669"/>
    <property type="project" value="InterPro"/>
</dbReference>
<dbReference type="CDD" id="cd07786">
    <property type="entry name" value="FGGY_EcGK_like"/>
    <property type="match status" value="1"/>
</dbReference>
<dbReference type="FunFam" id="3.30.420.40:FF:000007">
    <property type="entry name" value="Glycerol kinase"/>
    <property type="match status" value="1"/>
</dbReference>
<dbReference type="FunFam" id="3.30.420.40:FF:000008">
    <property type="entry name" value="Glycerol kinase"/>
    <property type="match status" value="1"/>
</dbReference>
<dbReference type="Gene3D" id="3.30.420.40">
    <property type="match status" value="2"/>
</dbReference>
<dbReference type="HAMAP" id="MF_00186">
    <property type="entry name" value="Glycerol_kin"/>
    <property type="match status" value="1"/>
</dbReference>
<dbReference type="InterPro" id="IPR043129">
    <property type="entry name" value="ATPase_NBD"/>
</dbReference>
<dbReference type="InterPro" id="IPR000577">
    <property type="entry name" value="Carb_kinase_FGGY"/>
</dbReference>
<dbReference type="InterPro" id="IPR018483">
    <property type="entry name" value="Carb_kinase_FGGY_CS"/>
</dbReference>
<dbReference type="InterPro" id="IPR018485">
    <property type="entry name" value="FGGY_C"/>
</dbReference>
<dbReference type="InterPro" id="IPR018484">
    <property type="entry name" value="FGGY_N"/>
</dbReference>
<dbReference type="InterPro" id="IPR005999">
    <property type="entry name" value="Glycerol_kin"/>
</dbReference>
<dbReference type="NCBIfam" id="TIGR01311">
    <property type="entry name" value="glycerol_kin"/>
    <property type="match status" value="1"/>
</dbReference>
<dbReference type="NCBIfam" id="NF000756">
    <property type="entry name" value="PRK00047.1"/>
    <property type="match status" value="1"/>
</dbReference>
<dbReference type="PANTHER" id="PTHR10196:SF69">
    <property type="entry name" value="GLYCEROL KINASE"/>
    <property type="match status" value="1"/>
</dbReference>
<dbReference type="PANTHER" id="PTHR10196">
    <property type="entry name" value="SUGAR KINASE"/>
    <property type="match status" value="1"/>
</dbReference>
<dbReference type="Pfam" id="PF02782">
    <property type="entry name" value="FGGY_C"/>
    <property type="match status" value="1"/>
</dbReference>
<dbReference type="Pfam" id="PF00370">
    <property type="entry name" value="FGGY_N"/>
    <property type="match status" value="1"/>
</dbReference>
<dbReference type="PIRSF" id="PIRSF000538">
    <property type="entry name" value="GlpK"/>
    <property type="match status" value="1"/>
</dbReference>
<dbReference type="SUPFAM" id="SSF53067">
    <property type="entry name" value="Actin-like ATPase domain"/>
    <property type="match status" value="2"/>
</dbReference>
<dbReference type="PROSITE" id="PS00933">
    <property type="entry name" value="FGGY_KINASES_1"/>
    <property type="match status" value="1"/>
</dbReference>
<dbReference type="PROSITE" id="PS00445">
    <property type="entry name" value="FGGY_KINASES_2"/>
    <property type="match status" value="1"/>
</dbReference>
<feature type="chain" id="PRO_1000020728" description="Glycerol kinase">
    <location>
        <begin position="1"/>
        <end position="497"/>
    </location>
</feature>
<feature type="binding site" evidence="1">
    <location>
        <position position="12"/>
    </location>
    <ligand>
        <name>ADP</name>
        <dbReference type="ChEBI" id="CHEBI:456216"/>
    </ligand>
</feature>
<feature type="binding site" evidence="1">
    <location>
        <position position="12"/>
    </location>
    <ligand>
        <name>ATP</name>
        <dbReference type="ChEBI" id="CHEBI:30616"/>
    </ligand>
</feature>
<feature type="binding site" evidence="1">
    <location>
        <position position="12"/>
    </location>
    <ligand>
        <name>sn-glycerol 3-phosphate</name>
        <dbReference type="ChEBI" id="CHEBI:57597"/>
    </ligand>
</feature>
<feature type="binding site" evidence="1">
    <location>
        <position position="13"/>
    </location>
    <ligand>
        <name>ATP</name>
        <dbReference type="ChEBI" id="CHEBI:30616"/>
    </ligand>
</feature>
<feature type="binding site" evidence="1">
    <location>
        <position position="14"/>
    </location>
    <ligand>
        <name>ATP</name>
        <dbReference type="ChEBI" id="CHEBI:30616"/>
    </ligand>
</feature>
<feature type="binding site" evidence="1">
    <location>
        <position position="16"/>
    </location>
    <ligand>
        <name>ADP</name>
        <dbReference type="ChEBI" id="CHEBI:456216"/>
    </ligand>
</feature>
<feature type="binding site" evidence="1">
    <location>
        <position position="82"/>
    </location>
    <ligand>
        <name>glycerol</name>
        <dbReference type="ChEBI" id="CHEBI:17754"/>
    </ligand>
</feature>
<feature type="binding site" evidence="1">
    <location>
        <position position="82"/>
    </location>
    <ligand>
        <name>sn-glycerol 3-phosphate</name>
        <dbReference type="ChEBI" id="CHEBI:57597"/>
    </ligand>
</feature>
<feature type="binding site" evidence="1">
    <location>
        <position position="83"/>
    </location>
    <ligand>
        <name>glycerol</name>
        <dbReference type="ChEBI" id="CHEBI:17754"/>
    </ligand>
</feature>
<feature type="binding site" evidence="1">
    <location>
        <position position="83"/>
    </location>
    <ligand>
        <name>sn-glycerol 3-phosphate</name>
        <dbReference type="ChEBI" id="CHEBI:57597"/>
    </ligand>
</feature>
<feature type="binding site" evidence="1">
    <location>
        <position position="134"/>
    </location>
    <ligand>
        <name>glycerol</name>
        <dbReference type="ChEBI" id="CHEBI:17754"/>
    </ligand>
</feature>
<feature type="binding site" evidence="1">
    <location>
        <position position="134"/>
    </location>
    <ligand>
        <name>sn-glycerol 3-phosphate</name>
        <dbReference type="ChEBI" id="CHEBI:57597"/>
    </ligand>
</feature>
<feature type="binding site" evidence="1">
    <location>
        <position position="243"/>
    </location>
    <ligand>
        <name>glycerol</name>
        <dbReference type="ChEBI" id="CHEBI:17754"/>
    </ligand>
</feature>
<feature type="binding site" evidence="1">
    <location>
        <position position="243"/>
    </location>
    <ligand>
        <name>sn-glycerol 3-phosphate</name>
        <dbReference type="ChEBI" id="CHEBI:57597"/>
    </ligand>
</feature>
<feature type="binding site" evidence="1">
    <location>
        <position position="244"/>
    </location>
    <ligand>
        <name>glycerol</name>
        <dbReference type="ChEBI" id="CHEBI:17754"/>
    </ligand>
</feature>
<feature type="binding site" evidence="1">
    <location>
        <position position="265"/>
    </location>
    <ligand>
        <name>ADP</name>
        <dbReference type="ChEBI" id="CHEBI:456216"/>
    </ligand>
</feature>
<feature type="binding site" evidence="1">
    <location>
        <position position="265"/>
    </location>
    <ligand>
        <name>ATP</name>
        <dbReference type="ChEBI" id="CHEBI:30616"/>
    </ligand>
</feature>
<feature type="binding site" evidence="1">
    <location>
        <position position="308"/>
    </location>
    <ligand>
        <name>ADP</name>
        <dbReference type="ChEBI" id="CHEBI:456216"/>
    </ligand>
</feature>
<feature type="binding site" evidence="1">
    <location>
        <position position="308"/>
    </location>
    <ligand>
        <name>ATP</name>
        <dbReference type="ChEBI" id="CHEBI:30616"/>
    </ligand>
</feature>
<feature type="binding site" evidence="1">
    <location>
        <position position="312"/>
    </location>
    <ligand>
        <name>ATP</name>
        <dbReference type="ChEBI" id="CHEBI:30616"/>
    </ligand>
</feature>
<feature type="binding site" evidence="1">
    <location>
        <position position="409"/>
    </location>
    <ligand>
        <name>ADP</name>
        <dbReference type="ChEBI" id="CHEBI:456216"/>
    </ligand>
</feature>
<feature type="binding site" evidence="1">
    <location>
        <position position="409"/>
    </location>
    <ligand>
        <name>ATP</name>
        <dbReference type="ChEBI" id="CHEBI:30616"/>
    </ligand>
</feature>
<feature type="binding site" evidence="1">
    <location>
        <position position="413"/>
    </location>
    <ligand>
        <name>ADP</name>
        <dbReference type="ChEBI" id="CHEBI:456216"/>
    </ligand>
</feature>
<keyword id="KW-0067">ATP-binding</keyword>
<keyword id="KW-0319">Glycerol metabolism</keyword>
<keyword id="KW-0418">Kinase</keyword>
<keyword id="KW-0547">Nucleotide-binding</keyword>
<keyword id="KW-0808">Transferase</keyword>
<accession>A1VA10</accession>
<organism>
    <name type="scientific">Nitratidesulfovibrio vulgaris (strain DP4)</name>
    <name type="common">Desulfovibrio vulgaris</name>
    <dbReference type="NCBI Taxonomy" id="391774"/>
    <lineage>
        <taxon>Bacteria</taxon>
        <taxon>Pseudomonadati</taxon>
        <taxon>Thermodesulfobacteriota</taxon>
        <taxon>Desulfovibrionia</taxon>
        <taxon>Desulfovibrionales</taxon>
        <taxon>Desulfovibrionaceae</taxon>
        <taxon>Nitratidesulfovibrio</taxon>
    </lineage>
</organism>
<gene>
    <name evidence="1" type="primary">glpK</name>
    <name type="ordered locus">Dvul_0252</name>
</gene>